<evidence type="ECO:0000250" key="1"/>
<evidence type="ECO:0000255" key="2">
    <source>
        <dbReference type="PROSITE-ProRule" id="PRU00077"/>
    </source>
</evidence>
<evidence type="ECO:0000256" key="3">
    <source>
        <dbReference type="SAM" id="MobiDB-lite"/>
    </source>
</evidence>
<evidence type="ECO:0000305" key="4"/>
<organism>
    <name type="scientific">Aspergillus niger (strain ATCC MYA-4892 / CBS 513.88 / FGSC A1513)</name>
    <dbReference type="NCBI Taxonomy" id="425011"/>
    <lineage>
        <taxon>Eukaryota</taxon>
        <taxon>Fungi</taxon>
        <taxon>Dikarya</taxon>
        <taxon>Ascomycota</taxon>
        <taxon>Pezizomycotina</taxon>
        <taxon>Eurotiomycetes</taxon>
        <taxon>Eurotiomycetidae</taxon>
        <taxon>Eurotiales</taxon>
        <taxon>Aspergillaceae</taxon>
        <taxon>Aspergillus</taxon>
        <taxon>Aspergillus subgen. Circumdati</taxon>
    </lineage>
</organism>
<reference key="1">
    <citation type="journal article" date="2007" name="Nat. Biotechnol.">
        <title>Genome sequencing and analysis of the versatile cell factory Aspergillus niger CBS 513.88.</title>
        <authorList>
            <person name="Pel H.J."/>
            <person name="de Winde J.H."/>
            <person name="Archer D.B."/>
            <person name="Dyer P.S."/>
            <person name="Hofmann G."/>
            <person name="Schaap P.J."/>
            <person name="Turner G."/>
            <person name="de Vries R.P."/>
            <person name="Albang R."/>
            <person name="Albermann K."/>
            <person name="Andersen M.R."/>
            <person name="Bendtsen J.D."/>
            <person name="Benen J.A.E."/>
            <person name="van den Berg M."/>
            <person name="Breestraat S."/>
            <person name="Caddick M.X."/>
            <person name="Contreras R."/>
            <person name="Cornell M."/>
            <person name="Coutinho P.M."/>
            <person name="Danchin E.G.J."/>
            <person name="Debets A.J.M."/>
            <person name="Dekker P."/>
            <person name="van Dijck P.W.M."/>
            <person name="van Dijk A."/>
            <person name="Dijkhuizen L."/>
            <person name="Driessen A.J.M."/>
            <person name="d'Enfert C."/>
            <person name="Geysens S."/>
            <person name="Goosen C."/>
            <person name="Groot G.S.P."/>
            <person name="de Groot P.W.J."/>
            <person name="Guillemette T."/>
            <person name="Henrissat B."/>
            <person name="Herweijer M."/>
            <person name="van den Hombergh J.P.T.W."/>
            <person name="van den Hondel C.A.M.J.J."/>
            <person name="van der Heijden R.T.J.M."/>
            <person name="van der Kaaij R.M."/>
            <person name="Klis F.M."/>
            <person name="Kools H.J."/>
            <person name="Kubicek C.P."/>
            <person name="van Kuyk P.A."/>
            <person name="Lauber J."/>
            <person name="Lu X."/>
            <person name="van der Maarel M.J.E.C."/>
            <person name="Meulenberg R."/>
            <person name="Menke H."/>
            <person name="Mortimer M.A."/>
            <person name="Nielsen J."/>
            <person name="Oliver S.G."/>
            <person name="Olsthoorn M."/>
            <person name="Pal K."/>
            <person name="van Peij N.N.M.E."/>
            <person name="Ram A.F.J."/>
            <person name="Rinas U."/>
            <person name="Roubos J.A."/>
            <person name="Sagt C.M.J."/>
            <person name="Schmoll M."/>
            <person name="Sun J."/>
            <person name="Ussery D."/>
            <person name="Varga J."/>
            <person name="Vervecken W."/>
            <person name="van de Vondervoort P.J.J."/>
            <person name="Wedler H."/>
            <person name="Woesten H.A.B."/>
            <person name="Zeng A.-P."/>
            <person name="van Ooyen A.J.J."/>
            <person name="Visser J."/>
            <person name="Stam H."/>
        </authorList>
    </citation>
    <scope>NUCLEOTIDE SEQUENCE [LARGE SCALE GENOMIC DNA]</scope>
    <source>
        <strain>ATCC MYA-4892 / CBS 513.88 / FGSC A1513</strain>
    </source>
</reference>
<protein>
    <recommendedName>
        <fullName>Increased rDNA silencing protein 4</fullName>
    </recommendedName>
</protein>
<dbReference type="EMBL" id="AM270399">
    <property type="protein sequence ID" value="CAK47299.1"/>
    <property type="molecule type" value="Genomic_DNA"/>
</dbReference>
<dbReference type="RefSeq" id="XP_001398686.2">
    <property type="nucleotide sequence ID" value="XM_001398649.2"/>
</dbReference>
<dbReference type="SMR" id="A2RA84"/>
<dbReference type="EnsemblFungi" id="CAK47299">
    <property type="protein sequence ID" value="CAK47299"/>
    <property type="gene ID" value="An18g02270"/>
</dbReference>
<dbReference type="GeneID" id="4989787"/>
<dbReference type="KEGG" id="ang:An18g02270"/>
<dbReference type="VEuPathDB" id="FungiDB:An18g02270"/>
<dbReference type="HOGENOM" id="CLU_014603_1_0_1"/>
<dbReference type="Proteomes" id="UP000006706">
    <property type="component" value="Chromosome 8L"/>
</dbReference>
<dbReference type="GO" id="GO:0006629">
    <property type="term" value="P:lipid metabolic process"/>
    <property type="evidence" value="ECO:0007669"/>
    <property type="project" value="UniProtKB-KW"/>
</dbReference>
<dbReference type="CDD" id="cd00052">
    <property type="entry name" value="EH"/>
    <property type="match status" value="1"/>
</dbReference>
<dbReference type="Gene3D" id="1.10.238.10">
    <property type="entry name" value="EF-hand"/>
    <property type="match status" value="1"/>
</dbReference>
<dbReference type="InterPro" id="IPR011992">
    <property type="entry name" value="EF-hand-dom_pair"/>
</dbReference>
<dbReference type="InterPro" id="IPR000261">
    <property type="entry name" value="EH_dom"/>
</dbReference>
<dbReference type="Pfam" id="PF12763">
    <property type="entry name" value="EH"/>
    <property type="match status" value="1"/>
</dbReference>
<dbReference type="SMART" id="SM00027">
    <property type="entry name" value="EH"/>
    <property type="match status" value="1"/>
</dbReference>
<dbReference type="SUPFAM" id="SSF47473">
    <property type="entry name" value="EF-hand"/>
    <property type="match status" value="1"/>
</dbReference>
<dbReference type="PROSITE" id="PS50031">
    <property type="entry name" value="EH"/>
    <property type="match status" value="1"/>
</dbReference>
<gene>
    <name type="primary">irs4</name>
    <name type="ORF">An18g02270</name>
</gene>
<comment type="function">
    <text evidence="1">Positive regulator of phosphatidylinositol 4,5-bisphosphate turnover and negatively regulates signaling through the cell integrity pathway. Involved in rDNA silencing (By similarity).</text>
</comment>
<comment type="similarity">
    <text evidence="4">Belongs to the IRS4 family.</text>
</comment>
<sequence length="504" mass="55104">MEPVGVSHNTPEMDPPRNIQTPELPESGSVKDKIGKFSAYQQQPSGLKDAFGKTPTSIGANRSRTPQQIAAQLAAGRSTPGEITATHTGVSRTQGSRPTTSKRSDDNEGPPLLAPKPVWATSANTASVNKLLRSEADLPIRDKSIQRRPVAQISPIEAARLAAKKPRPPPVPRKPAAVATGPTSVPINVHSKGPESPEPTSKNHSSRHLEDTTIPFKAPPALPPRTGASSVPRKDLTNHRRLLDTNHGSRRRPSTPGTASLYTTSLSNSTTSLLDSSSGLDEGALSDAVVASSRASVRASQERKVPPPPPPERRARSRSLKQFPHTAKGEHTDSSSPSTHLRQTLREPTKIAENDEGYQRHKHLIRKHPHKHHEGDRRRWRSEITEKERKRYEGVWAANKGLLLPPAHLRVPEAYPPESSEMVVNLVAADIWSRSRLPRHVLAQVWDLVDGQHIGLLTREEFVVGMWLIDQQLKGHKLPPRVPASVWGSAKRISGVHIHGLPPA</sequence>
<accession>A2RA84</accession>
<name>IRS4_ASPNC</name>
<feature type="chain" id="PRO_0000308750" description="Increased rDNA silencing protein 4">
    <location>
        <begin position="1"/>
        <end position="504"/>
    </location>
</feature>
<feature type="domain" description="EH" evidence="2">
    <location>
        <begin position="388"/>
        <end position="493"/>
    </location>
</feature>
<feature type="region of interest" description="Disordered" evidence="3">
    <location>
        <begin position="1"/>
        <end position="123"/>
    </location>
</feature>
<feature type="region of interest" description="Disordered" evidence="3">
    <location>
        <begin position="135"/>
        <end position="264"/>
    </location>
</feature>
<feature type="region of interest" description="Disordered" evidence="3">
    <location>
        <begin position="292"/>
        <end position="382"/>
    </location>
</feature>
<feature type="compositionally biased region" description="Polar residues" evidence="3">
    <location>
        <begin position="54"/>
        <end position="70"/>
    </location>
</feature>
<feature type="compositionally biased region" description="Polar residues" evidence="3">
    <location>
        <begin position="85"/>
        <end position="101"/>
    </location>
</feature>
<feature type="compositionally biased region" description="Basic and acidic residues" evidence="3">
    <location>
        <begin position="135"/>
        <end position="145"/>
    </location>
</feature>
<feature type="compositionally biased region" description="Basic and acidic residues" evidence="3">
    <location>
        <begin position="232"/>
        <end position="244"/>
    </location>
</feature>
<feature type="compositionally biased region" description="Basic and acidic residues" evidence="3">
    <location>
        <begin position="344"/>
        <end position="359"/>
    </location>
</feature>
<feature type="compositionally biased region" description="Basic residues" evidence="3">
    <location>
        <begin position="360"/>
        <end position="372"/>
    </location>
</feature>
<feature type="compositionally biased region" description="Basic and acidic residues" evidence="3">
    <location>
        <begin position="373"/>
        <end position="382"/>
    </location>
</feature>
<proteinExistence type="inferred from homology"/>
<keyword id="KW-0443">Lipid metabolism</keyword>
<keyword id="KW-1185">Reference proteome</keyword>